<sequence>MKQILDFIPLIVFFALYKMYDIYVATGALIVATAIQIVLTFALYKKVEKMQLITFAMVAIFGGMTIFLHDENFIKWKVTIVYAIFAIGLAVSHAMGKSAIKGMLGKEITLPDAIWTKINWAWVAFFSFCAGLNVYVAFELPLDVWVNFKVFGLLIATFAYMIATGFYIYKHMPKEQKEQKEKSSDVSLDD</sequence>
<comment type="function">
    <text evidence="1">Plays a role in cell envelope biogenesis, maintenance of cell envelope integrity and membrane homeostasis.</text>
</comment>
<comment type="subcellular location">
    <subcellularLocation>
        <location evidence="1">Cell inner membrane</location>
        <topology evidence="1">Multi-pass membrane protein</topology>
    </subcellularLocation>
</comment>
<comment type="similarity">
    <text evidence="1">Belongs to the YciB family.</text>
</comment>
<feature type="chain" id="PRO_1000021073" description="Inner membrane-spanning protein YciB">
    <location>
        <begin position="1"/>
        <end position="190"/>
    </location>
</feature>
<feature type="transmembrane region" description="Helical" evidence="1">
    <location>
        <begin position="22"/>
        <end position="42"/>
    </location>
</feature>
<feature type="transmembrane region" description="Helical" evidence="1">
    <location>
        <begin position="50"/>
        <end position="70"/>
    </location>
</feature>
<feature type="transmembrane region" description="Helical" evidence="1">
    <location>
        <begin position="76"/>
        <end position="96"/>
    </location>
</feature>
<feature type="transmembrane region" description="Helical" evidence="1">
    <location>
        <begin position="118"/>
        <end position="138"/>
    </location>
</feature>
<feature type="transmembrane region" description="Helical" evidence="1">
    <location>
        <begin position="148"/>
        <end position="168"/>
    </location>
</feature>
<protein>
    <recommendedName>
        <fullName evidence="1">Inner membrane-spanning protein YciB</fullName>
    </recommendedName>
</protein>
<organism>
    <name type="scientific">Vibrio campbellii (strain ATCC BAA-1116)</name>
    <dbReference type="NCBI Taxonomy" id="2902295"/>
    <lineage>
        <taxon>Bacteria</taxon>
        <taxon>Pseudomonadati</taxon>
        <taxon>Pseudomonadota</taxon>
        <taxon>Gammaproteobacteria</taxon>
        <taxon>Vibrionales</taxon>
        <taxon>Vibrionaceae</taxon>
        <taxon>Vibrio</taxon>
    </lineage>
</organism>
<name>YCIB_VIBC1</name>
<proteinExistence type="inferred from homology"/>
<gene>
    <name evidence="1" type="primary">yciB</name>
    <name type="ordered locus">VIBHAR_02768</name>
</gene>
<dbReference type="EMBL" id="CP000789">
    <property type="protein sequence ID" value="ABU71722.1"/>
    <property type="molecule type" value="Genomic_DNA"/>
</dbReference>
<dbReference type="RefSeq" id="WP_012128350.1">
    <property type="nucleotide sequence ID" value="NC_009783.1"/>
</dbReference>
<dbReference type="KEGG" id="vha:VIBHAR_02768"/>
<dbReference type="PATRIC" id="fig|338187.25.peg.3408"/>
<dbReference type="Proteomes" id="UP000008152">
    <property type="component" value="Chromosome I"/>
</dbReference>
<dbReference type="GO" id="GO:0005886">
    <property type="term" value="C:plasma membrane"/>
    <property type="evidence" value="ECO:0007669"/>
    <property type="project" value="UniProtKB-SubCell"/>
</dbReference>
<dbReference type="HAMAP" id="MF_00189">
    <property type="entry name" value="YciB"/>
    <property type="match status" value="1"/>
</dbReference>
<dbReference type="InterPro" id="IPR006008">
    <property type="entry name" value="YciB"/>
</dbReference>
<dbReference type="NCBIfam" id="TIGR00997">
    <property type="entry name" value="ispZ"/>
    <property type="match status" value="1"/>
</dbReference>
<dbReference type="NCBIfam" id="NF001324">
    <property type="entry name" value="PRK00259.1-2"/>
    <property type="match status" value="1"/>
</dbReference>
<dbReference type="NCBIfam" id="NF001325">
    <property type="entry name" value="PRK00259.1-3"/>
    <property type="match status" value="1"/>
</dbReference>
<dbReference type="PANTHER" id="PTHR36917:SF1">
    <property type="entry name" value="INNER MEMBRANE-SPANNING PROTEIN YCIB"/>
    <property type="match status" value="1"/>
</dbReference>
<dbReference type="PANTHER" id="PTHR36917">
    <property type="entry name" value="INTRACELLULAR SEPTATION PROTEIN A-RELATED"/>
    <property type="match status" value="1"/>
</dbReference>
<dbReference type="Pfam" id="PF04279">
    <property type="entry name" value="IspA"/>
    <property type="match status" value="1"/>
</dbReference>
<keyword id="KW-0997">Cell inner membrane</keyword>
<keyword id="KW-1003">Cell membrane</keyword>
<keyword id="KW-0472">Membrane</keyword>
<keyword id="KW-0812">Transmembrane</keyword>
<keyword id="KW-1133">Transmembrane helix</keyword>
<reference key="1">
    <citation type="submission" date="2007-08" db="EMBL/GenBank/DDBJ databases">
        <authorList>
            <consortium name="The Vibrio harveyi Genome Sequencing Project"/>
            <person name="Bassler B."/>
            <person name="Clifton S.W."/>
            <person name="Fulton L."/>
            <person name="Delehaunty K."/>
            <person name="Fronick C."/>
            <person name="Harrison M."/>
            <person name="Markivic C."/>
            <person name="Fulton R."/>
            <person name="Tin-Wollam A.-M."/>
            <person name="Shah N."/>
            <person name="Pepin K."/>
            <person name="Nash W."/>
            <person name="Thiruvilangam P."/>
            <person name="Bhonagiri V."/>
            <person name="Waters C."/>
            <person name="Tu K.C."/>
            <person name="Irgon J."/>
            <person name="Wilson R.K."/>
        </authorList>
    </citation>
    <scope>NUCLEOTIDE SEQUENCE [LARGE SCALE GENOMIC DNA]</scope>
    <source>
        <strain>ATCC BAA-1116 / BB120</strain>
    </source>
</reference>
<evidence type="ECO:0000255" key="1">
    <source>
        <dbReference type="HAMAP-Rule" id="MF_00189"/>
    </source>
</evidence>
<accession>A7MRY6</accession>